<gene>
    <name evidence="4 9" type="primary">IGHV3-9</name>
</gene>
<dbReference type="EMBL" id="AC233755">
    <property type="status" value="NOT_ANNOTATED_CDS"/>
    <property type="molecule type" value="Genomic_DNA"/>
</dbReference>
<dbReference type="PIR" id="A90431">
    <property type="entry name" value="G1HUDB"/>
</dbReference>
<dbReference type="EMDB" id="EMD-21647"/>
<dbReference type="EMDB" id="EMD-32734"/>
<dbReference type="EMDB" id="EMD-32839"/>
<dbReference type="SMR" id="P01782"/>
<dbReference type="FunCoup" id="P01782">
    <property type="interactions" value="421"/>
</dbReference>
<dbReference type="IMGT_GENE-DB" id="IGHV3-9"/>
<dbReference type="BioMuta" id="HGNC:5628"/>
<dbReference type="DMDM" id="123861"/>
<dbReference type="jPOST" id="P01782"/>
<dbReference type="MassIVE" id="P01782"/>
<dbReference type="AGR" id="HGNC:5628"/>
<dbReference type="GeneCards" id="IGHV3-9"/>
<dbReference type="HGNC" id="HGNC:5628">
    <property type="gene designation" value="IGHV3-9"/>
</dbReference>
<dbReference type="neXtProt" id="NX_P01782"/>
<dbReference type="InParanoid" id="P01782"/>
<dbReference type="PAN-GO" id="P01782">
    <property type="GO annotations" value="11 GO annotations based on evolutionary models"/>
</dbReference>
<dbReference type="PhylomeDB" id="P01782"/>
<dbReference type="PathwayCommons" id="P01782"/>
<dbReference type="Reactome" id="R-HSA-166663">
    <property type="pathway name" value="Initial triggering of complement"/>
</dbReference>
<dbReference type="Reactome" id="R-HSA-173623">
    <property type="pathway name" value="Classical antibody-mediated complement activation"/>
</dbReference>
<dbReference type="Reactome" id="R-HSA-198933">
    <property type="pathway name" value="Immunoregulatory interactions between a Lymphoid and a non-Lymphoid cell"/>
</dbReference>
<dbReference type="Reactome" id="R-HSA-202733">
    <property type="pathway name" value="Cell surface interactions at the vascular wall"/>
</dbReference>
<dbReference type="Reactome" id="R-HSA-2029481">
    <property type="pathway name" value="FCGR activation"/>
</dbReference>
<dbReference type="Reactome" id="R-HSA-2029482">
    <property type="pathway name" value="Regulation of actin dynamics for phagocytic cup formation"/>
</dbReference>
<dbReference type="Reactome" id="R-HSA-2029485">
    <property type="pathway name" value="Role of phospholipids in phagocytosis"/>
</dbReference>
<dbReference type="Reactome" id="R-HSA-2168880">
    <property type="pathway name" value="Scavenging of heme from plasma"/>
</dbReference>
<dbReference type="Reactome" id="R-HSA-2454202">
    <property type="pathway name" value="Fc epsilon receptor (FCERI) signaling"/>
</dbReference>
<dbReference type="Reactome" id="R-HSA-2730905">
    <property type="pathway name" value="Role of LAT2/NTAL/LAB on calcium mobilization"/>
</dbReference>
<dbReference type="Reactome" id="R-HSA-2871796">
    <property type="pathway name" value="FCERI mediated MAPK activation"/>
</dbReference>
<dbReference type="Reactome" id="R-HSA-2871809">
    <property type="pathway name" value="FCERI mediated Ca+2 mobilization"/>
</dbReference>
<dbReference type="Reactome" id="R-HSA-2871837">
    <property type="pathway name" value="FCERI mediated NF-kB activation"/>
</dbReference>
<dbReference type="Reactome" id="R-HSA-5690714">
    <property type="pathway name" value="CD22 mediated BCR regulation"/>
</dbReference>
<dbReference type="Reactome" id="R-HSA-9664323">
    <property type="pathway name" value="FCGR3A-mediated IL10 synthesis"/>
</dbReference>
<dbReference type="Reactome" id="R-HSA-9664422">
    <property type="pathway name" value="FCGR3A-mediated phagocytosis"/>
</dbReference>
<dbReference type="Reactome" id="R-HSA-9679191">
    <property type="pathway name" value="Potential therapeutics for SARS"/>
</dbReference>
<dbReference type="Reactome" id="R-HSA-977606">
    <property type="pathway name" value="Regulation of Complement cascade"/>
</dbReference>
<dbReference type="Reactome" id="R-HSA-983695">
    <property type="pathway name" value="Antigen activates B Cell Receptor (BCR) leading to generation of second messengers"/>
</dbReference>
<dbReference type="Pharos" id="P01782">
    <property type="development level" value="Tdark"/>
</dbReference>
<dbReference type="PRO" id="PR:P01782"/>
<dbReference type="Proteomes" id="UP000005640">
    <property type="component" value="Unplaced"/>
</dbReference>
<dbReference type="RNAct" id="P01782">
    <property type="molecule type" value="protein"/>
</dbReference>
<dbReference type="GO" id="GO:0070062">
    <property type="term" value="C:extracellular exosome"/>
    <property type="evidence" value="ECO:0007005"/>
    <property type="project" value="UniProtKB"/>
</dbReference>
<dbReference type="GO" id="GO:0005576">
    <property type="term" value="C:extracellular region"/>
    <property type="evidence" value="ECO:0000304"/>
    <property type="project" value="Reactome"/>
</dbReference>
<dbReference type="GO" id="GO:0019814">
    <property type="term" value="C:immunoglobulin complex"/>
    <property type="evidence" value="ECO:0007669"/>
    <property type="project" value="UniProtKB-KW"/>
</dbReference>
<dbReference type="GO" id="GO:0005886">
    <property type="term" value="C:plasma membrane"/>
    <property type="evidence" value="ECO:0000304"/>
    <property type="project" value="Reactome"/>
</dbReference>
<dbReference type="GO" id="GO:0003823">
    <property type="term" value="F:antigen binding"/>
    <property type="evidence" value="ECO:0000318"/>
    <property type="project" value="GO_Central"/>
</dbReference>
<dbReference type="GO" id="GO:0006955">
    <property type="term" value="P:immune response"/>
    <property type="evidence" value="ECO:0000303"/>
    <property type="project" value="UniProtKB"/>
</dbReference>
<dbReference type="GO" id="GO:0016064">
    <property type="term" value="P:immunoglobulin mediated immune response"/>
    <property type="evidence" value="ECO:0000318"/>
    <property type="project" value="GO_Central"/>
</dbReference>
<dbReference type="CDD" id="cd04981">
    <property type="entry name" value="IgV_H"/>
    <property type="match status" value="1"/>
</dbReference>
<dbReference type="FunFam" id="2.60.40.10:FF:001142">
    <property type="entry name" value="Immunoglobulin heavy variable 5-15"/>
    <property type="match status" value="1"/>
</dbReference>
<dbReference type="Gene3D" id="2.60.40.10">
    <property type="entry name" value="Immunoglobulins"/>
    <property type="match status" value="1"/>
</dbReference>
<dbReference type="InterPro" id="IPR007110">
    <property type="entry name" value="Ig-like_dom"/>
</dbReference>
<dbReference type="InterPro" id="IPR036179">
    <property type="entry name" value="Ig-like_dom_sf"/>
</dbReference>
<dbReference type="InterPro" id="IPR013783">
    <property type="entry name" value="Ig-like_fold"/>
</dbReference>
<dbReference type="InterPro" id="IPR013106">
    <property type="entry name" value="Ig_V-set"/>
</dbReference>
<dbReference type="InterPro" id="IPR050199">
    <property type="entry name" value="IgHV"/>
</dbReference>
<dbReference type="PANTHER" id="PTHR23266">
    <property type="entry name" value="IMMUNOGLOBULIN HEAVY CHAIN"/>
    <property type="match status" value="1"/>
</dbReference>
<dbReference type="Pfam" id="PF07686">
    <property type="entry name" value="V-set"/>
    <property type="match status" value="1"/>
</dbReference>
<dbReference type="SMART" id="SM00406">
    <property type="entry name" value="IGv"/>
    <property type="match status" value="1"/>
</dbReference>
<dbReference type="SUPFAM" id="SSF48726">
    <property type="entry name" value="Immunoglobulin"/>
    <property type="match status" value="1"/>
</dbReference>
<dbReference type="PROSITE" id="PS50835">
    <property type="entry name" value="IG_LIKE"/>
    <property type="match status" value="1"/>
</dbReference>
<reference key="1">
    <citation type="journal article" date="2003" name="Nature">
        <title>The DNA sequence and analysis of human chromosome 14.</title>
        <authorList>
            <person name="Heilig R."/>
            <person name="Eckenberg R."/>
            <person name="Petit J.-L."/>
            <person name="Fonknechten N."/>
            <person name="Da Silva C."/>
            <person name="Cattolico L."/>
            <person name="Levy M."/>
            <person name="Barbe V."/>
            <person name="De Berardinis V."/>
            <person name="Ureta-Vidal A."/>
            <person name="Pelletier E."/>
            <person name="Vico V."/>
            <person name="Anthouard V."/>
            <person name="Rowen L."/>
            <person name="Madan A."/>
            <person name="Qin S."/>
            <person name="Sun H."/>
            <person name="Du H."/>
            <person name="Pepin K."/>
            <person name="Artiguenave F."/>
            <person name="Robert C."/>
            <person name="Cruaud C."/>
            <person name="Bruels T."/>
            <person name="Jaillon O."/>
            <person name="Friedlander L."/>
            <person name="Samson G."/>
            <person name="Brottier P."/>
            <person name="Cure S."/>
            <person name="Segurens B."/>
            <person name="Aniere F."/>
            <person name="Samain S."/>
            <person name="Crespeau H."/>
            <person name="Abbasi N."/>
            <person name="Aiach N."/>
            <person name="Boscus D."/>
            <person name="Dickhoff R."/>
            <person name="Dors M."/>
            <person name="Dubois I."/>
            <person name="Friedman C."/>
            <person name="Gouyvenoux M."/>
            <person name="James R."/>
            <person name="Madan A."/>
            <person name="Mairey-Estrada B."/>
            <person name="Mangenot S."/>
            <person name="Martins N."/>
            <person name="Menard M."/>
            <person name="Oztas S."/>
            <person name="Ratcliffe A."/>
            <person name="Shaffer T."/>
            <person name="Trask B."/>
            <person name="Vacherie B."/>
            <person name="Bellemere C."/>
            <person name="Belser C."/>
            <person name="Besnard-Gonnet M."/>
            <person name="Bartol-Mavel D."/>
            <person name="Boutard M."/>
            <person name="Briez-Silla S."/>
            <person name="Combette S."/>
            <person name="Dufosse-Laurent V."/>
            <person name="Ferron C."/>
            <person name="Lechaplais C."/>
            <person name="Louesse C."/>
            <person name="Muselet D."/>
            <person name="Magdelenat G."/>
            <person name="Pateau E."/>
            <person name="Petit E."/>
            <person name="Sirvain-Trukniewicz P."/>
            <person name="Trybou A."/>
            <person name="Vega-Czarny N."/>
            <person name="Bataille E."/>
            <person name="Bluet E."/>
            <person name="Bordelais I."/>
            <person name="Dubois M."/>
            <person name="Dumont C."/>
            <person name="Guerin T."/>
            <person name="Haffray S."/>
            <person name="Hammadi R."/>
            <person name="Muanga J."/>
            <person name="Pellouin V."/>
            <person name="Robert D."/>
            <person name="Wunderle E."/>
            <person name="Gauguet G."/>
            <person name="Roy A."/>
            <person name="Sainte-Marthe L."/>
            <person name="Verdier J."/>
            <person name="Verdier-Discala C."/>
            <person name="Hillier L.W."/>
            <person name="Fulton L."/>
            <person name="McPherson J."/>
            <person name="Matsuda F."/>
            <person name="Wilson R."/>
            <person name="Scarpelli C."/>
            <person name="Gyapay G."/>
            <person name="Wincker P."/>
            <person name="Saurin W."/>
            <person name="Quetier F."/>
            <person name="Waterston R."/>
            <person name="Hood L."/>
            <person name="Weissenbach J."/>
        </authorList>
    </citation>
    <scope>NUCLEOTIDE SEQUENCE [LARGE SCALE GENOMIC DNA] (IMGT ALLELE IGHV3-9*01)</scope>
</reference>
<reference key="2">
    <citation type="journal article" date="1979" name="Biochemistry">
        <title>Amino acid sequence of the heavy-chain variable region of the crystallizable human myeloma protein Dob.</title>
        <authorList>
            <person name="Steiner L.A."/>
            <person name="Garcia Pardo A."/>
            <person name="Margolies M.N."/>
        </authorList>
    </citation>
    <scope>PROTEIN SEQUENCE OF 20-118</scope>
</reference>
<reference key="3">
    <citation type="journal article" date="2001" name="Exp. Clin. Immunogenet.">
        <title>Nomenclature of the human immunoglobulin heavy (IGH) genes.</title>
        <authorList>
            <person name="Lefranc M.P."/>
        </authorList>
    </citation>
    <scope>NOMENCLATURE</scope>
</reference>
<reference key="4">
    <citation type="book" date="2001" name="The Immunoglobulin FactsBook.">
        <title>The Immunoglobulin FactsBook.</title>
        <editorList>
            <person name="Lefranc M.P."/>
            <person name="Lefranc G."/>
        </editorList>
        <authorList>
            <person name="Lefranc M.P."/>
            <person name="Lefranc G."/>
        </authorList>
    </citation>
    <scope>NOMENCLATURE</scope>
</reference>
<reference key="5">
    <citation type="journal article" date="2007" name="Annu. Rev. Genet.">
        <title>Immunoglobulin somatic hypermutation.</title>
        <authorList>
            <person name="Teng G."/>
            <person name="Papavasiliou F.N."/>
        </authorList>
    </citation>
    <scope>REVIEW ON SOMATIC HYPERMUTATION</scope>
</reference>
<reference key="6">
    <citation type="journal article" date="2010" name="J. Allergy Clin. Immunol.">
        <title>Structure and function of immunoglobulins.</title>
        <authorList>
            <person name="Schroeder H.W. Jr."/>
            <person name="Cavacini L."/>
        </authorList>
    </citation>
    <scope>REVIEW ON IMMUNOGLOBULINS</scope>
</reference>
<reference key="7">
    <citation type="journal article" date="2012" name="Nat. Rev. Immunol.">
        <title>Molecular programming of B cell memory.</title>
        <authorList>
            <person name="McHeyzer-Williams M."/>
            <person name="Okitsu S."/>
            <person name="Wang N."/>
            <person name="McHeyzer-Williams L."/>
        </authorList>
    </citation>
    <scope>REVIEW ON FUNCTION</scope>
</reference>
<reference key="8">
    <citation type="journal article" date="2014" name="Front. Immunol.">
        <title>Immunoglobulin and T Cell Receptor Genes: IMGT((R)) and the Birth and Rise of Immunoinformatics.</title>
        <authorList>
            <person name="Lefranc M.P."/>
        </authorList>
    </citation>
    <scope>NOMENCLATURE</scope>
</reference>
<reference key="9">
    <citation type="journal article" date="1979" name="Biochemistry">
        <title>The crystallizable human myeloma protein Dob has a hinge-region deletion.</title>
        <authorList>
            <person name="Steiner L.A."/>
            <person name="Lopes A.D."/>
        </authorList>
    </citation>
    <scope>CRYSTALLIZATION</scope>
</reference>
<proteinExistence type="evidence at protein level"/>
<accession>P01782</accession>
<name>HV309_HUMAN</name>
<protein>
    <recommendedName>
        <fullName evidence="4 9">Immunoglobulin heavy variable 3-9</fullName>
    </recommendedName>
    <alternativeName>
        <fullName evidence="11">Ig heavy chain V-III region DOB</fullName>
    </alternativeName>
</protein>
<evidence type="ECO:0000250" key="1">
    <source>
        <dbReference type="UniProtKB" id="P23083"/>
    </source>
</evidence>
<evidence type="ECO:0000255" key="2">
    <source>
        <dbReference type="PROSITE-ProRule" id="PRU00114"/>
    </source>
</evidence>
<evidence type="ECO:0000269" key="3">
    <source>
    </source>
</evidence>
<evidence type="ECO:0000303" key="4">
    <source>
    </source>
</evidence>
<evidence type="ECO:0000303" key="5">
    <source>
    </source>
</evidence>
<evidence type="ECO:0000303" key="6">
    <source>
    </source>
</evidence>
<evidence type="ECO:0000303" key="7">
    <source>
    </source>
</evidence>
<evidence type="ECO:0000303" key="8">
    <source>
    </source>
</evidence>
<evidence type="ECO:0000303" key="9">
    <source ref="4"/>
</evidence>
<evidence type="ECO:0000305" key="10"/>
<evidence type="ECO:0000305" key="11">
    <source>
    </source>
</evidence>
<keyword id="KW-1064">Adaptive immunity</keyword>
<keyword id="KW-1003">Cell membrane</keyword>
<keyword id="KW-0903">Direct protein sequencing</keyword>
<keyword id="KW-1015">Disulfide bond</keyword>
<keyword id="KW-0391">Immunity</keyword>
<keyword id="KW-1280">Immunoglobulin</keyword>
<keyword id="KW-0393">Immunoglobulin domain</keyword>
<keyword id="KW-0472">Membrane</keyword>
<keyword id="KW-1267">Proteomics identification</keyword>
<keyword id="KW-1185">Reference proteome</keyword>
<keyword id="KW-0964">Secreted</keyword>
<keyword id="KW-0732">Signal</keyword>
<feature type="signal peptide" evidence="3">
    <location>
        <begin position="1"/>
        <end position="19"/>
    </location>
</feature>
<feature type="chain" id="PRO_0000059933" description="Immunoglobulin heavy variable 3-9" evidence="3">
    <location>
        <begin position="20"/>
        <end position="118"/>
    </location>
</feature>
<feature type="domain" description="Ig-like" evidence="2">
    <location>
        <begin position="20"/>
        <end position="118" status="greater than"/>
    </location>
</feature>
<feature type="region of interest" description="Framework-1" evidence="1">
    <location>
        <begin position="20"/>
        <end position="44"/>
    </location>
</feature>
<feature type="region of interest" description="Complementarity-determining-1" evidence="1">
    <location>
        <begin position="45"/>
        <end position="52"/>
    </location>
</feature>
<feature type="region of interest" description="Framework-2" evidence="1">
    <location>
        <begin position="53"/>
        <end position="69"/>
    </location>
</feature>
<feature type="region of interest" description="Complementarity-determining-2" evidence="1">
    <location>
        <begin position="70"/>
        <end position="77"/>
    </location>
</feature>
<feature type="region of interest" description="Framework-3" evidence="1">
    <location>
        <begin position="78"/>
        <end position="115"/>
    </location>
</feature>
<feature type="region of interest" description="Complementarity-determining-3" evidence="1">
    <location>
        <begin position="116"/>
        <end position="118" status="greater than"/>
    </location>
</feature>
<feature type="disulfide bond" evidence="2">
    <location>
        <begin position="41"/>
        <end position="115"/>
    </location>
</feature>
<feature type="sequence conflict" description="In Ref. 2; AA sequence." evidence="10" ref="2">
    <original>G</original>
    <variation>D</variation>
    <location>
        <position position="29"/>
    </location>
</feature>
<feature type="sequence conflict" description="In Ref. 2; AA sequence." evidence="10" ref="2">
    <original>TFDDYA</original>
    <variation>NFHEYN</variation>
    <location>
        <begin position="47"/>
        <end position="52"/>
    </location>
</feature>
<feature type="sequence conflict" description="In Ref. 2; AA sequence." evidence="10" ref="2">
    <original>V</original>
    <variation>L</variation>
    <location>
        <position position="56"/>
    </location>
</feature>
<feature type="sequence conflict" description="In Ref. 2; AA sequence." evidence="10" ref="2">
    <original>A</original>
    <variation>G</variation>
    <location>
        <position position="59"/>
    </location>
</feature>
<feature type="sequence conflict" description="In Ref. 2; AA sequence." evidence="10" ref="2">
    <original>L</original>
    <variation>P</variation>
    <location>
        <position position="64"/>
    </location>
</feature>
<feature type="sequence conflict" description="In Ref. 2; AA sequence." evidence="10" ref="2">
    <original>GIS</original>
    <variation>TIT</variation>
    <location>
        <begin position="69"/>
        <end position="71"/>
    </location>
</feature>
<feature type="sequence conflict" description="In Ref. 2; AA sequence." evidence="10" ref="2">
    <original>S</original>
    <variation>G</variation>
    <location>
        <position position="74"/>
    </location>
</feature>
<feature type="sequence conflict" description="In Ref. 2; AA sequence." evidence="10" ref="2">
    <original>IG</original>
    <variation>VL</variation>
    <location>
        <begin position="77"/>
        <end position="78"/>
    </location>
</feature>
<feature type="sequence conflict" description="In Ref. 2; AA sequence." evidence="10" ref="2">
    <original>T</original>
    <variation>A</variation>
    <location>
        <position position="88"/>
    </location>
</feature>
<feature type="sequence conflict" description="In Ref. 2; AA sequence." evidence="10" ref="2">
    <original>KNS</original>
    <variation>QKT</variation>
    <location>
        <begin position="95"/>
        <end position="97"/>
    </location>
</feature>
<feature type="sequence conflict" description="In Ref. 2; AA sequence." evidence="10" ref="2">
    <original>MNS</original>
    <variation>LNI</variation>
    <location>
        <begin position="102"/>
        <end position="104"/>
    </location>
</feature>
<feature type="sequence conflict" description="In Ref. 2; AA sequence." evidence="10" ref="2">
    <original>A</original>
    <variation>P</variation>
    <location>
        <position position="107"/>
    </location>
</feature>
<feature type="sequence conflict" description="In Ref. 2; AA sequence." evidence="10" ref="2">
    <original>L</original>
    <variation>F</variation>
    <location>
        <position position="112"/>
    </location>
</feature>
<feature type="sequence conflict" description="In Ref. 2; AA sequence." evidence="10" ref="2">
    <original>D</original>
    <variation>G</variation>
    <location>
        <position position="118"/>
    </location>
</feature>
<feature type="non-terminal residue">
    <location>
        <position position="118"/>
    </location>
</feature>
<sequence>MELGLSWIFLLAILKGVQCEVQLVESGGGLVQPGRSLRLSCAASGFTFDDYAMHWVRQAPGKGLEWVSGISWNSGSIGYADSVKGRFTISRDNAKNSLYLQMNSLRAEDTALYYCAKD</sequence>
<organism>
    <name type="scientific">Homo sapiens</name>
    <name type="common">Human</name>
    <dbReference type="NCBI Taxonomy" id="9606"/>
    <lineage>
        <taxon>Eukaryota</taxon>
        <taxon>Metazoa</taxon>
        <taxon>Chordata</taxon>
        <taxon>Craniata</taxon>
        <taxon>Vertebrata</taxon>
        <taxon>Euteleostomi</taxon>
        <taxon>Mammalia</taxon>
        <taxon>Eutheria</taxon>
        <taxon>Euarchontoglires</taxon>
        <taxon>Primates</taxon>
        <taxon>Haplorrhini</taxon>
        <taxon>Catarrhini</taxon>
        <taxon>Hominidae</taxon>
        <taxon>Homo</taxon>
    </lineage>
</organism>
<comment type="function">
    <text evidence="5 6 7 8">V region of the variable domain of immunoglobulin heavy chains that participates in the antigen recognition (PubMed:24600447). Immunoglobulins, also known as antibodies, are membrane-bound or secreted glycoproteins produced by B lymphocytes. In the recognition phase of humoral immunity, the membrane-bound immunoglobulins serve as receptors which, upon binding of a specific antigen, trigger the clonal expansion and differentiation of B lymphocytes into immunoglobulins-secreting plasma cells. Secreted immunoglobulins mediate the effector phase of humoral immunity, which results in the elimination of bound antigens (PubMed:20176268, PubMed:22158414). The antigen binding site is formed by the variable domain of one heavy chain, together with that of its associated light chain. Thus, each immunoglobulin has two antigen binding sites with remarkable affinity for a particular antigen. The variable domains are assembled by a process called V-(D)-J rearrangement and can then be subjected to somatic hypermutations which, after exposure to antigen and selection, allow affinity maturation for a particular antigen (PubMed:17576170, PubMed:20176268).</text>
</comment>
<comment type="subunit">
    <text evidence="6">Immunoglobulins are composed of two identical heavy chains and two identical light chains; disulfide-linked.</text>
</comment>
<comment type="subcellular location">
    <subcellularLocation>
        <location evidence="6 7">Secreted</location>
    </subcellularLocation>
    <subcellularLocation>
        <location evidence="6 7">Cell membrane</location>
    </subcellularLocation>
</comment>
<comment type="polymorphism">
    <text evidence="10">There are several alleles. The sequence shown is that of IMGT allele IGHV3-9*01.</text>
</comment>
<comment type="caution">
    <text evidence="10">For examples of full-length immunoglobulin heavy chains (of different isotypes) see AC P0DOX2, AC P0DOX3, AC P0DOX4, AC P0DOX5 and AC P0DOX6.</text>
</comment>